<feature type="chain" id="PRO_1000196132" description="Large ribosomal subunit protein bL34">
    <location>
        <begin position="1"/>
        <end position="44"/>
    </location>
</feature>
<feature type="region of interest" description="Disordered" evidence="2">
    <location>
        <begin position="1"/>
        <end position="44"/>
    </location>
</feature>
<gene>
    <name evidence="1" type="primary">rpmH</name>
    <name type="ordered locus">THA_1834</name>
</gene>
<proteinExistence type="inferred from homology"/>
<accession>B7IE38</accession>
<sequence length="44" mass="5348">MKRTYQPSRIKRKRTHGFLARKKTAGGRKVLKNRRRKGRWRLAV</sequence>
<keyword id="KW-1185">Reference proteome</keyword>
<keyword id="KW-0687">Ribonucleoprotein</keyword>
<keyword id="KW-0689">Ribosomal protein</keyword>
<organism>
    <name type="scientific">Thermosipho africanus (strain TCF52B)</name>
    <dbReference type="NCBI Taxonomy" id="484019"/>
    <lineage>
        <taxon>Bacteria</taxon>
        <taxon>Thermotogati</taxon>
        <taxon>Thermotogota</taxon>
        <taxon>Thermotogae</taxon>
        <taxon>Thermotogales</taxon>
        <taxon>Fervidobacteriaceae</taxon>
        <taxon>Thermosipho</taxon>
    </lineage>
</organism>
<comment type="similarity">
    <text evidence="1">Belongs to the bacterial ribosomal protein bL34 family.</text>
</comment>
<name>RL34_THEAB</name>
<protein>
    <recommendedName>
        <fullName evidence="1">Large ribosomal subunit protein bL34</fullName>
    </recommendedName>
    <alternativeName>
        <fullName evidence="3">50S ribosomal protein L34</fullName>
    </alternativeName>
</protein>
<reference key="1">
    <citation type="journal article" date="2009" name="J. Bacteriol.">
        <title>The genome of Thermosipho africanus TCF52B: lateral genetic connections to the Firmicutes and Archaea.</title>
        <authorList>
            <person name="Nesboe C.L."/>
            <person name="Bapteste E."/>
            <person name="Curtis B."/>
            <person name="Dahle H."/>
            <person name="Lopez P."/>
            <person name="Macleod D."/>
            <person name="Dlutek M."/>
            <person name="Bowman S."/>
            <person name="Zhaxybayeva O."/>
            <person name="Birkeland N.-K."/>
            <person name="Doolittle W.F."/>
        </authorList>
    </citation>
    <scope>NUCLEOTIDE SEQUENCE [LARGE SCALE GENOMIC DNA]</scope>
    <source>
        <strain>TCF52B</strain>
    </source>
</reference>
<evidence type="ECO:0000255" key="1">
    <source>
        <dbReference type="HAMAP-Rule" id="MF_00391"/>
    </source>
</evidence>
<evidence type="ECO:0000256" key="2">
    <source>
        <dbReference type="SAM" id="MobiDB-lite"/>
    </source>
</evidence>
<evidence type="ECO:0000305" key="3"/>
<dbReference type="EMBL" id="CP001185">
    <property type="protein sequence ID" value="ACJ76265.1"/>
    <property type="molecule type" value="Genomic_DNA"/>
</dbReference>
<dbReference type="RefSeq" id="WP_004102791.1">
    <property type="nucleotide sequence ID" value="NC_011653.1"/>
</dbReference>
<dbReference type="SMR" id="B7IE38"/>
<dbReference type="STRING" id="484019.THA_1834"/>
<dbReference type="KEGG" id="taf:THA_1834"/>
<dbReference type="eggNOG" id="COG0230">
    <property type="taxonomic scope" value="Bacteria"/>
</dbReference>
<dbReference type="HOGENOM" id="CLU_129938_2_0_0"/>
<dbReference type="OrthoDB" id="9804164at2"/>
<dbReference type="Proteomes" id="UP000002453">
    <property type="component" value="Chromosome"/>
</dbReference>
<dbReference type="GO" id="GO:1990904">
    <property type="term" value="C:ribonucleoprotein complex"/>
    <property type="evidence" value="ECO:0007669"/>
    <property type="project" value="UniProtKB-KW"/>
</dbReference>
<dbReference type="GO" id="GO:0005840">
    <property type="term" value="C:ribosome"/>
    <property type="evidence" value="ECO:0007669"/>
    <property type="project" value="UniProtKB-KW"/>
</dbReference>
<dbReference type="GO" id="GO:0003735">
    <property type="term" value="F:structural constituent of ribosome"/>
    <property type="evidence" value="ECO:0007669"/>
    <property type="project" value="InterPro"/>
</dbReference>
<dbReference type="GO" id="GO:0006412">
    <property type="term" value="P:translation"/>
    <property type="evidence" value="ECO:0007669"/>
    <property type="project" value="UniProtKB-UniRule"/>
</dbReference>
<dbReference type="FunFam" id="1.10.287.3980:FF:000001">
    <property type="entry name" value="Mitochondrial ribosomal protein L34"/>
    <property type="match status" value="1"/>
</dbReference>
<dbReference type="Gene3D" id="1.10.287.3980">
    <property type="match status" value="1"/>
</dbReference>
<dbReference type="HAMAP" id="MF_00391">
    <property type="entry name" value="Ribosomal_bL34"/>
    <property type="match status" value="1"/>
</dbReference>
<dbReference type="InterPro" id="IPR000271">
    <property type="entry name" value="Ribosomal_bL34"/>
</dbReference>
<dbReference type="InterPro" id="IPR020939">
    <property type="entry name" value="Ribosomal_bL34_CS"/>
</dbReference>
<dbReference type="NCBIfam" id="TIGR01030">
    <property type="entry name" value="rpmH_bact"/>
    <property type="match status" value="1"/>
</dbReference>
<dbReference type="PANTHER" id="PTHR14503:SF4">
    <property type="entry name" value="LARGE RIBOSOMAL SUBUNIT PROTEIN BL34M"/>
    <property type="match status" value="1"/>
</dbReference>
<dbReference type="PANTHER" id="PTHR14503">
    <property type="entry name" value="MITOCHONDRIAL RIBOSOMAL PROTEIN 34 FAMILY MEMBER"/>
    <property type="match status" value="1"/>
</dbReference>
<dbReference type="Pfam" id="PF00468">
    <property type="entry name" value="Ribosomal_L34"/>
    <property type="match status" value="1"/>
</dbReference>
<dbReference type="PROSITE" id="PS00784">
    <property type="entry name" value="RIBOSOMAL_L34"/>
    <property type="match status" value="1"/>
</dbReference>